<protein>
    <recommendedName>
        <fullName evidence="1">Ribosomal RNA small subunit methyltransferase I</fullName>
        <ecNumber evidence="1">2.1.1.198</ecNumber>
    </recommendedName>
    <alternativeName>
        <fullName evidence="1">16S rRNA 2'-O-ribose C1402 methyltransferase</fullName>
    </alternativeName>
    <alternativeName>
        <fullName evidence="1">rRNA (cytidine-2'-O-)-methyltransferase RsmI</fullName>
    </alternativeName>
</protein>
<organism>
    <name type="scientific">Neisseria meningitidis serogroup B (strain ATCC BAA-335 / MC58)</name>
    <dbReference type="NCBI Taxonomy" id="122586"/>
    <lineage>
        <taxon>Bacteria</taxon>
        <taxon>Pseudomonadati</taxon>
        <taxon>Pseudomonadota</taxon>
        <taxon>Betaproteobacteria</taxon>
        <taxon>Neisseriales</taxon>
        <taxon>Neisseriaceae</taxon>
        <taxon>Neisseria</taxon>
    </lineage>
</organism>
<name>RSMI_NEIMB</name>
<comment type="function">
    <text evidence="1">Catalyzes the 2'-O-methylation of the ribose of cytidine 1402 (C1402) in 16S rRNA.</text>
</comment>
<comment type="catalytic activity">
    <reaction evidence="1">
        <text>cytidine(1402) in 16S rRNA + S-adenosyl-L-methionine = 2'-O-methylcytidine(1402) in 16S rRNA + S-adenosyl-L-homocysteine + H(+)</text>
        <dbReference type="Rhea" id="RHEA:42924"/>
        <dbReference type="Rhea" id="RHEA-COMP:10285"/>
        <dbReference type="Rhea" id="RHEA-COMP:10286"/>
        <dbReference type="ChEBI" id="CHEBI:15378"/>
        <dbReference type="ChEBI" id="CHEBI:57856"/>
        <dbReference type="ChEBI" id="CHEBI:59789"/>
        <dbReference type="ChEBI" id="CHEBI:74495"/>
        <dbReference type="ChEBI" id="CHEBI:82748"/>
        <dbReference type="EC" id="2.1.1.198"/>
    </reaction>
</comment>
<comment type="subcellular location">
    <subcellularLocation>
        <location evidence="1">Cytoplasm</location>
    </subcellularLocation>
</comment>
<comment type="similarity">
    <text evidence="1">Belongs to the methyltransferase superfamily. RsmI family.</text>
</comment>
<keyword id="KW-0963">Cytoplasm</keyword>
<keyword id="KW-0489">Methyltransferase</keyword>
<keyword id="KW-1185">Reference proteome</keyword>
<keyword id="KW-0698">rRNA processing</keyword>
<keyword id="KW-0949">S-adenosyl-L-methionine</keyword>
<keyword id="KW-0808">Transferase</keyword>
<reference key="1">
    <citation type="journal article" date="2000" name="Science">
        <title>Complete genome sequence of Neisseria meningitidis serogroup B strain MC58.</title>
        <authorList>
            <person name="Tettelin H."/>
            <person name="Saunders N.J."/>
            <person name="Heidelberg J.F."/>
            <person name="Jeffries A.C."/>
            <person name="Nelson K.E."/>
            <person name="Eisen J.A."/>
            <person name="Ketchum K.A."/>
            <person name="Hood D.W."/>
            <person name="Peden J.F."/>
            <person name="Dodson R.J."/>
            <person name="Nelson W.C."/>
            <person name="Gwinn M.L."/>
            <person name="DeBoy R.T."/>
            <person name="Peterson J.D."/>
            <person name="Hickey E.K."/>
            <person name="Haft D.H."/>
            <person name="Salzberg S.L."/>
            <person name="White O."/>
            <person name="Fleischmann R.D."/>
            <person name="Dougherty B.A."/>
            <person name="Mason T.M."/>
            <person name="Ciecko A."/>
            <person name="Parksey D.S."/>
            <person name="Blair E."/>
            <person name="Cittone H."/>
            <person name="Clark E.B."/>
            <person name="Cotton M.D."/>
            <person name="Utterback T.R."/>
            <person name="Khouri H.M."/>
            <person name="Qin H."/>
            <person name="Vamathevan J.J."/>
            <person name="Gill J."/>
            <person name="Scarlato V."/>
            <person name="Masignani V."/>
            <person name="Pizza M."/>
            <person name="Grandi G."/>
            <person name="Sun L."/>
            <person name="Smith H.O."/>
            <person name="Fraser C.M."/>
            <person name="Moxon E.R."/>
            <person name="Rappuoli R."/>
            <person name="Venter J.C."/>
        </authorList>
    </citation>
    <scope>NUCLEOTIDE SEQUENCE [LARGE SCALE GENOMIC DNA]</scope>
    <source>
        <strain>ATCC BAA-335 / MC58</strain>
    </source>
</reference>
<dbReference type="EC" id="2.1.1.198" evidence="1"/>
<dbReference type="EMBL" id="AE002098">
    <property type="protein sequence ID" value="AAF42405.1"/>
    <property type="molecule type" value="Genomic_DNA"/>
</dbReference>
<dbReference type="PIR" id="F81007">
    <property type="entry name" value="F81007"/>
</dbReference>
<dbReference type="RefSeq" id="NP_275076.1">
    <property type="nucleotide sequence ID" value="NC_003112.2"/>
</dbReference>
<dbReference type="RefSeq" id="WP_002225719.1">
    <property type="nucleotide sequence ID" value="NC_003112.2"/>
</dbReference>
<dbReference type="SMR" id="Q9JXE3"/>
<dbReference type="FunCoup" id="Q9JXE3">
    <property type="interactions" value="313"/>
</dbReference>
<dbReference type="STRING" id="122586.NMB2088"/>
<dbReference type="PaxDb" id="122586-NMB2088"/>
<dbReference type="KEGG" id="nme:NMB2088"/>
<dbReference type="PATRIC" id="fig|122586.8.peg.2670"/>
<dbReference type="HOGENOM" id="CLU_044779_2_0_4"/>
<dbReference type="InParanoid" id="Q9JXE3"/>
<dbReference type="OrthoDB" id="9809084at2"/>
<dbReference type="Proteomes" id="UP000000425">
    <property type="component" value="Chromosome"/>
</dbReference>
<dbReference type="GO" id="GO:0005737">
    <property type="term" value="C:cytoplasm"/>
    <property type="evidence" value="ECO:0007669"/>
    <property type="project" value="UniProtKB-SubCell"/>
</dbReference>
<dbReference type="GO" id="GO:0070677">
    <property type="term" value="F:rRNA (cytosine-2'-O-)-methyltransferase activity"/>
    <property type="evidence" value="ECO:0007669"/>
    <property type="project" value="UniProtKB-UniRule"/>
</dbReference>
<dbReference type="CDD" id="cd11648">
    <property type="entry name" value="RsmI"/>
    <property type="match status" value="1"/>
</dbReference>
<dbReference type="FunFam" id="3.30.950.10:FF:000002">
    <property type="entry name" value="Ribosomal RNA small subunit methyltransferase I"/>
    <property type="match status" value="1"/>
</dbReference>
<dbReference type="FunFam" id="3.40.1010.10:FF:000007">
    <property type="entry name" value="Ribosomal RNA small subunit methyltransferase I"/>
    <property type="match status" value="1"/>
</dbReference>
<dbReference type="Gene3D" id="3.40.1010.10">
    <property type="entry name" value="Cobalt-precorrin-4 Transmethylase, Domain 1"/>
    <property type="match status" value="1"/>
</dbReference>
<dbReference type="Gene3D" id="3.30.950.10">
    <property type="entry name" value="Methyltransferase, Cobalt-precorrin-4 Transmethylase, Domain 2"/>
    <property type="match status" value="1"/>
</dbReference>
<dbReference type="HAMAP" id="MF_01877">
    <property type="entry name" value="16SrRNA_methyltr_I"/>
    <property type="match status" value="1"/>
</dbReference>
<dbReference type="InterPro" id="IPR000878">
    <property type="entry name" value="4pyrrol_Mease"/>
</dbReference>
<dbReference type="InterPro" id="IPR035996">
    <property type="entry name" value="4pyrrol_Methylase_sf"/>
</dbReference>
<dbReference type="InterPro" id="IPR014777">
    <property type="entry name" value="4pyrrole_Mease_sub1"/>
</dbReference>
<dbReference type="InterPro" id="IPR014776">
    <property type="entry name" value="4pyrrole_Mease_sub2"/>
</dbReference>
<dbReference type="InterPro" id="IPR008189">
    <property type="entry name" value="rRNA_ssu_MeTfrase_I"/>
</dbReference>
<dbReference type="InterPro" id="IPR053910">
    <property type="entry name" value="RsmI_HTH"/>
</dbReference>
<dbReference type="InterPro" id="IPR018063">
    <property type="entry name" value="SAM_MeTrfase_RsmI_CS"/>
</dbReference>
<dbReference type="NCBIfam" id="TIGR00096">
    <property type="entry name" value="16S rRNA (cytidine(1402)-2'-O)-methyltransferase"/>
    <property type="match status" value="1"/>
</dbReference>
<dbReference type="PANTHER" id="PTHR46111">
    <property type="entry name" value="RIBOSOMAL RNA SMALL SUBUNIT METHYLTRANSFERASE I"/>
    <property type="match status" value="1"/>
</dbReference>
<dbReference type="PANTHER" id="PTHR46111:SF1">
    <property type="entry name" value="RIBOSOMAL RNA SMALL SUBUNIT METHYLTRANSFERASE I"/>
    <property type="match status" value="1"/>
</dbReference>
<dbReference type="Pfam" id="PF23016">
    <property type="entry name" value="RsmI_C"/>
    <property type="match status" value="1"/>
</dbReference>
<dbReference type="Pfam" id="PF00590">
    <property type="entry name" value="TP_methylase"/>
    <property type="match status" value="1"/>
</dbReference>
<dbReference type="PIRSF" id="PIRSF005917">
    <property type="entry name" value="MTase_YraL"/>
    <property type="match status" value="1"/>
</dbReference>
<dbReference type="SUPFAM" id="SSF53790">
    <property type="entry name" value="Tetrapyrrole methylase"/>
    <property type="match status" value="1"/>
</dbReference>
<dbReference type="PROSITE" id="PS01296">
    <property type="entry name" value="RSMI"/>
    <property type="match status" value="1"/>
</dbReference>
<gene>
    <name evidence="1" type="primary">rsmI</name>
    <name type="ordered locus">NMB2088</name>
</gene>
<accession>Q9JXE3</accession>
<proteinExistence type="inferred from homology"/>
<evidence type="ECO:0000255" key="1">
    <source>
        <dbReference type="HAMAP-Rule" id="MF_01877"/>
    </source>
</evidence>
<feature type="chain" id="PRO_0000211949" description="Ribosomal RNA small subunit methyltransferase I">
    <location>
        <begin position="1"/>
        <end position="291"/>
    </location>
</feature>
<sequence>MFQKHLQKASDSVVGGTLYVVATPIGNLADITLRALAVLQKADIICAEDTRVTAQLLSAYGIQGKLVSVREHNERQMADKIVGYLSDGMVVAQVSDAGTPAVCDPGAKLARRVREAGFKVVPVVGASAVMAALSVAGVEGSDFYFNGFVPPKSGERRKLFAKWVRAAFPIVMFETPHRIGATLADMAELFPERRLMLAREITKTFETFLSGTVGEIQTALSADGNQSRGEMVLVLYPAQDEKHEGLSESAQNIMKILTAELPTKQAAELAAKITGEGKKALYDLALSWKNK</sequence>